<comment type="function">
    <text evidence="1">This protein binds specifically to 23S rRNA; its binding is stimulated by other ribosomal proteins, e.g. L4, L17, and L20. It is important during the early stages of 50S assembly. It makes multiple contacts with different domains of the 23S rRNA in the assembled 50S subunit and ribosome (By similarity).</text>
</comment>
<comment type="function">
    <text evidence="1">The globular domain of the protein is located near the polypeptide exit tunnel on the outside of the subunit, while an extended beta-hairpin is found that lines the wall of the exit tunnel in the center of the 70S ribosome.</text>
</comment>
<comment type="subunit">
    <text evidence="1">Part of the 50S ribosomal subunit.</text>
</comment>
<comment type="similarity">
    <text evidence="1">Belongs to the universal ribosomal protein uL22 family.</text>
</comment>
<evidence type="ECO:0000255" key="1">
    <source>
        <dbReference type="HAMAP-Rule" id="MF_01331"/>
    </source>
</evidence>
<evidence type="ECO:0000256" key="2">
    <source>
        <dbReference type="SAM" id="MobiDB-lite"/>
    </source>
</evidence>
<evidence type="ECO:0000305" key="3"/>
<organism>
    <name type="scientific">Agathobacter rectalis (strain ATCC 33656 / DSM 3377 / JCM 17463 / KCTC 5835 / VPI 0990)</name>
    <name type="common">Eubacterium rectale</name>
    <dbReference type="NCBI Taxonomy" id="515619"/>
    <lineage>
        <taxon>Bacteria</taxon>
        <taxon>Bacillati</taxon>
        <taxon>Bacillota</taxon>
        <taxon>Clostridia</taxon>
        <taxon>Lachnospirales</taxon>
        <taxon>Lachnospiraceae</taxon>
        <taxon>Agathobacter</taxon>
    </lineage>
</organism>
<name>RL22_AGARV</name>
<reference key="1">
    <citation type="journal article" date="2009" name="Proc. Natl. Acad. Sci. U.S.A.">
        <title>Characterizing a model human gut microbiota composed of members of its two dominant bacterial phyla.</title>
        <authorList>
            <person name="Mahowald M.A."/>
            <person name="Rey F.E."/>
            <person name="Seedorf H."/>
            <person name="Turnbaugh P.J."/>
            <person name="Fulton R.S."/>
            <person name="Wollam A."/>
            <person name="Shah N."/>
            <person name="Wang C."/>
            <person name="Magrini V."/>
            <person name="Wilson R.K."/>
            <person name="Cantarel B.L."/>
            <person name="Coutinho P.M."/>
            <person name="Henrissat B."/>
            <person name="Crock L.W."/>
            <person name="Russell A."/>
            <person name="Verberkmoes N.C."/>
            <person name="Hettich R.L."/>
            <person name="Gordon J.I."/>
        </authorList>
    </citation>
    <scope>NUCLEOTIDE SEQUENCE [LARGE SCALE GENOMIC DNA]</scope>
    <source>
        <strain>ATCC 33656 / DSM 3377 / JCM 17463 / KCTC 5835 / LMG 30912 / VPI 0990</strain>
    </source>
</reference>
<gene>
    <name evidence="1" type="primary">rplV</name>
    <name type="ordered locus">EUBREC_0423</name>
</gene>
<accession>C4ZBS4</accession>
<protein>
    <recommendedName>
        <fullName evidence="1">Large ribosomal subunit protein uL22</fullName>
    </recommendedName>
    <alternativeName>
        <fullName evidence="3">50S ribosomal protein L22</fullName>
    </alternativeName>
</protein>
<feature type="chain" id="PRO_1000214604" description="Large ribosomal subunit protein uL22">
    <location>
        <begin position="1"/>
        <end position="131"/>
    </location>
</feature>
<feature type="region of interest" description="Disordered" evidence="2">
    <location>
        <begin position="1"/>
        <end position="20"/>
    </location>
</feature>
<feature type="compositionally biased region" description="Basic residues" evidence="2">
    <location>
        <begin position="1"/>
        <end position="11"/>
    </location>
</feature>
<proteinExistence type="inferred from homology"/>
<sequence length="131" mass="14980">MAKGHRSKIKRERNEVRDTRPSAKLSYARVSVQKACFVLDAIRGKSVNEALAIVTYNPRYASSLVKKLLESAIANAENNYPEKNYKAENLYVAECFANKGPTMKRIHPRAQGRAYRIEKRMSHITIVLDER</sequence>
<dbReference type="EMBL" id="CP001107">
    <property type="protein sequence ID" value="ACR74214.1"/>
    <property type="molecule type" value="Genomic_DNA"/>
</dbReference>
<dbReference type="RefSeq" id="WP_012741332.1">
    <property type="nucleotide sequence ID" value="NZ_CAXSYD010000003.1"/>
</dbReference>
<dbReference type="SMR" id="C4ZBS4"/>
<dbReference type="STRING" id="515619.EUBREC_0423"/>
<dbReference type="PaxDb" id="515619-EUBREC_0423"/>
<dbReference type="GeneID" id="86987333"/>
<dbReference type="KEGG" id="ere:EUBREC_0423"/>
<dbReference type="HOGENOM" id="CLU_083987_3_1_9"/>
<dbReference type="Proteomes" id="UP000001477">
    <property type="component" value="Chromosome"/>
</dbReference>
<dbReference type="GO" id="GO:0022625">
    <property type="term" value="C:cytosolic large ribosomal subunit"/>
    <property type="evidence" value="ECO:0007669"/>
    <property type="project" value="TreeGrafter"/>
</dbReference>
<dbReference type="GO" id="GO:0019843">
    <property type="term" value="F:rRNA binding"/>
    <property type="evidence" value="ECO:0007669"/>
    <property type="project" value="UniProtKB-UniRule"/>
</dbReference>
<dbReference type="GO" id="GO:0003735">
    <property type="term" value="F:structural constituent of ribosome"/>
    <property type="evidence" value="ECO:0007669"/>
    <property type="project" value="InterPro"/>
</dbReference>
<dbReference type="GO" id="GO:0006412">
    <property type="term" value="P:translation"/>
    <property type="evidence" value="ECO:0007669"/>
    <property type="project" value="UniProtKB-UniRule"/>
</dbReference>
<dbReference type="CDD" id="cd00336">
    <property type="entry name" value="Ribosomal_L22"/>
    <property type="match status" value="1"/>
</dbReference>
<dbReference type="Gene3D" id="3.90.470.10">
    <property type="entry name" value="Ribosomal protein L22/L17"/>
    <property type="match status" value="1"/>
</dbReference>
<dbReference type="HAMAP" id="MF_01331_B">
    <property type="entry name" value="Ribosomal_uL22_B"/>
    <property type="match status" value="1"/>
</dbReference>
<dbReference type="InterPro" id="IPR001063">
    <property type="entry name" value="Ribosomal_uL22"/>
</dbReference>
<dbReference type="InterPro" id="IPR005727">
    <property type="entry name" value="Ribosomal_uL22_bac/chlpt-type"/>
</dbReference>
<dbReference type="InterPro" id="IPR047867">
    <property type="entry name" value="Ribosomal_uL22_bac/org-type"/>
</dbReference>
<dbReference type="InterPro" id="IPR018260">
    <property type="entry name" value="Ribosomal_uL22_CS"/>
</dbReference>
<dbReference type="InterPro" id="IPR036394">
    <property type="entry name" value="Ribosomal_uL22_sf"/>
</dbReference>
<dbReference type="NCBIfam" id="TIGR01044">
    <property type="entry name" value="rplV_bact"/>
    <property type="match status" value="1"/>
</dbReference>
<dbReference type="PANTHER" id="PTHR13501">
    <property type="entry name" value="CHLOROPLAST 50S RIBOSOMAL PROTEIN L22-RELATED"/>
    <property type="match status" value="1"/>
</dbReference>
<dbReference type="PANTHER" id="PTHR13501:SF8">
    <property type="entry name" value="LARGE RIBOSOMAL SUBUNIT PROTEIN UL22M"/>
    <property type="match status" value="1"/>
</dbReference>
<dbReference type="Pfam" id="PF00237">
    <property type="entry name" value="Ribosomal_L22"/>
    <property type="match status" value="1"/>
</dbReference>
<dbReference type="SUPFAM" id="SSF54843">
    <property type="entry name" value="Ribosomal protein L22"/>
    <property type="match status" value="1"/>
</dbReference>
<dbReference type="PROSITE" id="PS00464">
    <property type="entry name" value="RIBOSOMAL_L22"/>
    <property type="match status" value="1"/>
</dbReference>
<keyword id="KW-0687">Ribonucleoprotein</keyword>
<keyword id="KW-0689">Ribosomal protein</keyword>
<keyword id="KW-0694">RNA-binding</keyword>
<keyword id="KW-0699">rRNA-binding</keyword>